<feature type="signal peptide">
    <location>
        <begin position="1"/>
        <end position="19"/>
    </location>
</feature>
<feature type="chain" id="PRO_0000014975" description="Thy-1 membrane glycoprotein">
    <location>
        <begin position="20"/>
        <end position="130"/>
    </location>
</feature>
<feature type="propeptide" id="PRO_0000014976" description="Removed in mature form" evidence="1">
    <location>
        <begin position="131"/>
        <end position="161"/>
    </location>
</feature>
<feature type="domain" description="Ig-like V-type">
    <location>
        <begin position="20"/>
        <end position="126"/>
    </location>
</feature>
<feature type="modified residue" description="Pyrrolidone carboxylic acid" evidence="3">
    <location>
        <position position="20"/>
    </location>
</feature>
<feature type="modified residue" description="Phosphoserine" evidence="2">
    <location>
        <position position="82"/>
    </location>
</feature>
<feature type="lipid moiety-binding region" description="GPI-anchor amidated cysteine; alternate" evidence="1">
    <location>
        <position position="130"/>
    </location>
</feature>
<feature type="glycosylation site" description="N-linked (GlcNAc...) asparagine" evidence="4">
    <location>
        <position position="42"/>
    </location>
</feature>
<feature type="glycosylation site" description="N-linked (GlcNAc...) asparagine" evidence="4">
    <location>
        <position position="79"/>
    </location>
</feature>
<feature type="glycosylation site" description="N-linked (GlcNAc...) asparagine" evidence="4">
    <location>
        <position position="119"/>
    </location>
</feature>
<feature type="glycosylation site" description="N-linked (GlcNAc...) asparagine" evidence="4">
    <location>
        <position position="139"/>
    </location>
</feature>
<feature type="disulfide bond" description="Alternate" evidence="5">
    <location>
        <begin position="28"/>
        <end position="130"/>
    </location>
</feature>
<feature type="disulfide bond" evidence="5">
    <location>
        <begin position="38"/>
        <end position="104"/>
    </location>
</feature>
<dbReference type="EMBL" id="U93310">
    <property type="protein sequence ID" value="AAC05640.1"/>
    <property type="molecule type" value="mRNA"/>
</dbReference>
<dbReference type="FunCoup" id="O62643">
    <property type="interactions" value="306"/>
</dbReference>
<dbReference type="STRING" id="9544.ENSMMUP00000011701"/>
<dbReference type="GlyCosmos" id="O62643">
    <property type="glycosylation" value="4 sites, No reported glycans"/>
</dbReference>
<dbReference type="PaxDb" id="9544-ENSMMUP00000011701"/>
<dbReference type="eggNOG" id="ENOG502S18P">
    <property type="taxonomic scope" value="Eukaryota"/>
</dbReference>
<dbReference type="InParanoid" id="O62643"/>
<dbReference type="Proteomes" id="UP000006718">
    <property type="component" value="Unassembled WGS sequence"/>
</dbReference>
<dbReference type="GO" id="GO:0030425">
    <property type="term" value="C:dendrite"/>
    <property type="evidence" value="ECO:0000318"/>
    <property type="project" value="GO_Central"/>
</dbReference>
<dbReference type="GO" id="GO:0009897">
    <property type="term" value="C:external side of plasma membrane"/>
    <property type="evidence" value="ECO:0000250"/>
    <property type="project" value="UniProtKB"/>
</dbReference>
<dbReference type="GO" id="GO:0030426">
    <property type="term" value="C:growth cone"/>
    <property type="evidence" value="ECO:0000250"/>
    <property type="project" value="UniProtKB"/>
</dbReference>
<dbReference type="GO" id="GO:0045121">
    <property type="term" value="C:membrane raft"/>
    <property type="evidence" value="ECO:0000318"/>
    <property type="project" value="GO_Central"/>
</dbReference>
<dbReference type="GO" id="GO:0005886">
    <property type="term" value="C:plasma membrane"/>
    <property type="evidence" value="ECO:0000250"/>
    <property type="project" value="UniProtKB"/>
</dbReference>
<dbReference type="GO" id="GO:0034235">
    <property type="term" value="F:GPI anchor binding"/>
    <property type="evidence" value="ECO:0000250"/>
    <property type="project" value="UniProtKB"/>
</dbReference>
<dbReference type="GO" id="GO:0005096">
    <property type="term" value="F:GTPase activator activity"/>
    <property type="evidence" value="ECO:0000250"/>
    <property type="project" value="UniProtKB"/>
</dbReference>
<dbReference type="GO" id="GO:0005178">
    <property type="term" value="F:integrin binding"/>
    <property type="evidence" value="ECO:0007669"/>
    <property type="project" value="InterPro"/>
</dbReference>
<dbReference type="GO" id="GO:0001525">
    <property type="term" value="P:angiogenesis"/>
    <property type="evidence" value="ECO:0000250"/>
    <property type="project" value="UniProtKB"/>
</dbReference>
<dbReference type="GO" id="GO:0098609">
    <property type="term" value="P:cell-cell adhesion"/>
    <property type="evidence" value="ECO:0000250"/>
    <property type="project" value="UniProtKB"/>
</dbReference>
<dbReference type="GO" id="GO:0007010">
    <property type="term" value="P:cytoskeleton organization"/>
    <property type="evidence" value="ECO:0000250"/>
    <property type="project" value="UniProtKB"/>
</dbReference>
<dbReference type="GO" id="GO:0048041">
    <property type="term" value="P:focal adhesion assembly"/>
    <property type="evidence" value="ECO:0000250"/>
    <property type="project" value="UniProtKB"/>
</dbReference>
<dbReference type="GO" id="GO:0007229">
    <property type="term" value="P:integrin-mediated signaling pathway"/>
    <property type="evidence" value="ECO:0000318"/>
    <property type="project" value="GO_Central"/>
</dbReference>
<dbReference type="GO" id="GO:0050771">
    <property type="term" value="P:negative regulation of axonogenesis"/>
    <property type="evidence" value="ECO:0000250"/>
    <property type="project" value="UniProtKB"/>
</dbReference>
<dbReference type="GO" id="GO:0030336">
    <property type="term" value="P:negative regulation of cell migration"/>
    <property type="evidence" value="ECO:0000250"/>
    <property type="project" value="UniProtKB"/>
</dbReference>
<dbReference type="GO" id="GO:0006469">
    <property type="term" value="P:negative regulation of protein kinase activity"/>
    <property type="evidence" value="ECO:0000250"/>
    <property type="project" value="UniProtKB"/>
</dbReference>
<dbReference type="GO" id="GO:0050860">
    <property type="term" value="P:negative regulation of T cell receptor signaling pathway"/>
    <property type="evidence" value="ECO:0000250"/>
    <property type="project" value="UniProtKB"/>
</dbReference>
<dbReference type="GO" id="GO:0051894">
    <property type="term" value="P:positive regulation of focal adhesion assembly"/>
    <property type="evidence" value="ECO:0000318"/>
    <property type="project" value="GO_Central"/>
</dbReference>
<dbReference type="GO" id="GO:0043547">
    <property type="term" value="P:positive regulation of GTPase activity"/>
    <property type="evidence" value="ECO:0000250"/>
    <property type="project" value="UniProtKB"/>
</dbReference>
<dbReference type="GO" id="GO:0051281">
    <property type="term" value="P:positive regulation of release of sequestered calcium ion into cytosol"/>
    <property type="evidence" value="ECO:0000250"/>
    <property type="project" value="UniProtKB"/>
</dbReference>
<dbReference type="GO" id="GO:0050870">
    <property type="term" value="P:positive regulation of T cell activation"/>
    <property type="evidence" value="ECO:0000250"/>
    <property type="project" value="UniProtKB"/>
</dbReference>
<dbReference type="GO" id="GO:0046549">
    <property type="term" value="P:retinal cone cell development"/>
    <property type="evidence" value="ECO:0000250"/>
    <property type="project" value="UniProtKB"/>
</dbReference>
<dbReference type="GO" id="GO:0050852">
    <property type="term" value="P:T cell receptor signaling pathway"/>
    <property type="evidence" value="ECO:0000250"/>
    <property type="project" value="UniProtKB"/>
</dbReference>
<dbReference type="FunFam" id="2.60.40.10:FF:001319">
    <property type="entry name" value="Thy-1 membrane glycoprotein"/>
    <property type="match status" value="1"/>
</dbReference>
<dbReference type="Gene3D" id="2.60.40.10">
    <property type="entry name" value="Immunoglobulins"/>
    <property type="match status" value="1"/>
</dbReference>
<dbReference type="InterPro" id="IPR007110">
    <property type="entry name" value="Ig-like_dom"/>
</dbReference>
<dbReference type="InterPro" id="IPR036179">
    <property type="entry name" value="Ig-like_dom_sf"/>
</dbReference>
<dbReference type="InterPro" id="IPR013783">
    <property type="entry name" value="Ig-like_fold"/>
</dbReference>
<dbReference type="InterPro" id="IPR013106">
    <property type="entry name" value="Ig_V-set"/>
</dbReference>
<dbReference type="InterPro" id="IPR013151">
    <property type="entry name" value="Immunoglobulin_dom"/>
</dbReference>
<dbReference type="InterPro" id="IPR033292">
    <property type="entry name" value="THY1"/>
</dbReference>
<dbReference type="PANTHER" id="PTHR19226">
    <property type="entry name" value="THY-1 MEMBRANE GLYCOPROTEIN"/>
    <property type="match status" value="1"/>
</dbReference>
<dbReference type="PANTHER" id="PTHR19226:SF2">
    <property type="entry name" value="THY-1 MEMBRANE GLYCOPROTEIN"/>
    <property type="match status" value="1"/>
</dbReference>
<dbReference type="Pfam" id="PF00047">
    <property type="entry name" value="ig"/>
    <property type="match status" value="1"/>
</dbReference>
<dbReference type="SMART" id="SM00406">
    <property type="entry name" value="IGv"/>
    <property type="match status" value="1"/>
</dbReference>
<dbReference type="SUPFAM" id="SSF48726">
    <property type="entry name" value="Immunoglobulin"/>
    <property type="match status" value="1"/>
</dbReference>
<dbReference type="PROSITE" id="PS50835">
    <property type="entry name" value="IG_LIKE"/>
    <property type="match status" value="1"/>
</dbReference>
<sequence>MNLAISIALLLTVLQVSRGQKVTSLTACLVDQSLRLDCRHENTTSSPIQYEFSLTRETKKHVLFGTVGVPEHTYRSRTNFTSKYNMKVLYLSAFTXKDEGTYTCXLHHSGHSPPISSQNVTVLRDKLVKCEGISLLAQNTSWLXLLLLSLSLLQATDFMSL</sequence>
<organism>
    <name type="scientific">Macaca mulatta</name>
    <name type="common">Rhesus macaque</name>
    <dbReference type="NCBI Taxonomy" id="9544"/>
    <lineage>
        <taxon>Eukaryota</taxon>
        <taxon>Metazoa</taxon>
        <taxon>Chordata</taxon>
        <taxon>Craniata</taxon>
        <taxon>Vertebrata</taxon>
        <taxon>Euteleostomi</taxon>
        <taxon>Mammalia</taxon>
        <taxon>Eutheria</taxon>
        <taxon>Euarchontoglires</taxon>
        <taxon>Primates</taxon>
        <taxon>Haplorrhini</taxon>
        <taxon>Catarrhini</taxon>
        <taxon>Cercopithecidae</taxon>
        <taxon>Cercopithecinae</taxon>
        <taxon>Macaca</taxon>
    </lineage>
</organism>
<evidence type="ECO:0000250" key="1"/>
<evidence type="ECO:0000250" key="2">
    <source>
        <dbReference type="UniProtKB" id="P01830"/>
    </source>
</evidence>
<evidence type="ECO:0000250" key="3">
    <source>
        <dbReference type="UniProtKB" id="P01831"/>
    </source>
</evidence>
<evidence type="ECO:0000255" key="4"/>
<evidence type="ECO:0000255" key="5">
    <source>
        <dbReference type="PROSITE-ProRule" id="PRU00114"/>
    </source>
</evidence>
<protein>
    <recommendedName>
        <fullName>Thy-1 membrane glycoprotein</fullName>
    </recommendedName>
    <alternativeName>
        <fullName>Thy-1 antigen</fullName>
    </alternativeName>
    <cdAntigenName>CD90</cdAntigenName>
</protein>
<name>THY1_MACMU</name>
<comment type="function">
    <text>May play a role in cell-cell or cell-ligand interactions during synaptogenesis and other events in the brain.</text>
</comment>
<comment type="subcellular location">
    <subcellularLocation>
        <location evidence="1">Cell membrane</location>
        <topology evidence="1">Lipid-anchor</topology>
        <topology evidence="1">GPI-anchor</topology>
    </subcellularLocation>
</comment>
<proteinExistence type="evidence at transcript level"/>
<gene>
    <name type="primary">THY1</name>
</gene>
<keyword id="KW-1003">Cell membrane</keyword>
<keyword id="KW-1015">Disulfide bond</keyword>
<keyword id="KW-0325">Glycoprotein</keyword>
<keyword id="KW-0336">GPI-anchor</keyword>
<keyword id="KW-0393">Immunoglobulin domain</keyword>
<keyword id="KW-0449">Lipoprotein</keyword>
<keyword id="KW-0472">Membrane</keyword>
<keyword id="KW-0597">Phosphoprotein</keyword>
<keyword id="KW-0873">Pyrrolidone carboxylic acid</keyword>
<keyword id="KW-1185">Reference proteome</keyword>
<keyword id="KW-0732">Signal</keyword>
<accession>O62643</accession>
<reference key="1">
    <citation type="submission" date="1997-03" db="EMBL/GenBank/DDBJ databases">
        <title>Rhesus macaque CD90.</title>
        <authorList>
            <person name="Margulies B.J."/>
            <person name="Clements J.E."/>
        </authorList>
    </citation>
    <scope>NUCLEOTIDE SEQUENCE [MRNA]</scope>
    <source>
        <tissue>Thymus</tissue>
    </source>
</reference>